<reference key="1">
    <citation type="submission" date="2007-04" db="EMBL/GenBank/DDBJ databases">
        <title>Complete sequence of Pyrobaculum arsenaticum DSM 13514.</title>
        <authorList>
            <consortium name="US DOE Joint Genome Institute"/>
            <person name="Copeland A."/>
            <person name="Lucas S."/>
            <person name="Lapidus A."/>
            <person name="Barry K."/>
            <person name="Glavina del Rio T."/>
            <person name="Dalin E."/>
            <person name="Tice H."/>
            <person name="Pitluck S."/>
            <person name="Chain P."/>
            <person name="Malfatti S."/>
            <person name="Shin M."/>
            <person name="Vergez L."/>
            <person name="Schmutz J."/>
            <person name="Larimer F."/>
            <person name="Land M."/>
            <person name="Hauser L."/>
            <person name="Kyrpides N."/>
            <person name="Mikhailova N."/>
            <person name="Cozen A.E."/>
            <person name="Fitz-Gibbon S.T."/>
            <person name="House C.H."/>
            <person name="Saltikov C."/>
            <person name="Lowe T.M."/>
            <person name="Richardson P."/>
        </authorList>
    </citation>
    <scope>NUCLEOTIDE SEQUENCE [LARGE SCALE GENOMIC DNA]</scope>
    <source>
        <strain>ATCC 700994 / DSM 13514 / JCM 11321 / PZ6</strain>
    </source>
</reference>
<keyword id="KW-0963">Cytoplasm</keyword>
<keyword id="KW-0255">Endonuclease</keyword>
<keyword id="KW-0378">Hydrolase</keyword>
<keyword id="KW-0464">Manganese</keyword>
<keyword id="KW-0479">Metal-binding</keyword>
<keyword id="KW-0540">Nuclease</keyword>
<feature type="chain" id="PRO_0000334985" description="Ribonuclease HII">
    <location>
        <begin position="1"/>
        <end position="198"/>
    </location>
</feature>
<feature type="domain" description="RNase H type-2" evidence="2">
    <location>
        <begin position="3"/>
        <end position="198"/>
    </location>
</feature>
<feature type="binding site" evidence="1">
    <location>
        <position position="9"/>
    </location>
    <ligand>
        <name>a divalent metal cation</name>
        <dbReference type="ChEBI" id="CHEBI:60240"/>
    </ligand>
</feature>
<feature type="binding site" evidence="1">
    <location>
        <position position="10"/>
    </location>
    <ligand>
        <name>a divalent metal cation</name>
        <dbReference type="ChEBI" id="CHEBI:60240"/>
    </ligand>
</feature>
<feature type="binding site" evidence="1">
    <location>
        <position position="104"/>
    </location>
    <ligand>
        <name>a divalent metal cation</name>
        <dbReference type="ChEBI" id="CHEBI:60240"/>
    </ligand>
</feature>
<gene>
    <name evidence="1" type="primary">rnhB</name>
    <name type="ordered locus">Pars_0312</name>
</gene>
<sequence>MTLSVGGIDEAGRGPVVGPLVLAIVVGDSEALSKIGVRDSKSLSPRAREVLYGKILEMAVCVNYAVVEPYEIDLHVSRGMLNALEMKYAAKLMELCPADLYYVDSPDVKAARFGDGLSFLTGRRVVSLHKGEAVPQVAAASIVAKVVRDRLVEMLRKEVGDFGSGYPSDRKTREWLRGGRIPHECVRWSWETVGKLFK</sequence>
<name>RNH2_PYRAR</name>
<comment type="function">
    <text evidence="1">Endonuclease that specifically degrades the RNA of RNA-DNA hybrids.</text>
</comment>
<comment type="catalytic activity">
    <reaction evidence="1">
        <text>Endonucleolytic cleavage to 5'-phosphomonoester.</text>
        <dbReference type="EC" id="3.1.26.4"/>
    </reaction>
</comment>
<comment type="cofactor">
    <cofactor evidence="1">
        <name>Mn(2+)</name>
        <dbReference type="ChEBI" id="CHEBI:29035"/>
    </cofactor>
    <cofactor evidence="1">
        <name>Mg(2+)</name>
        <dbReference type="ChEBI" id="CHEBI:18420"/>
    </cofactor>
    <text evidence="1">Manganese or magnesium. Binds 1 divalent metal ion per monomer in the absence of substrate. May bind a second metal ion after substrate binding.</text>
</comment>
<comment type="subcellular location">
    <subcellularLocation>
        <location evidence="1">Cytoplasm</location>
    </subcellularLocation>
</comment>
<comment type="similarity">
    <text evidence="1">Belongs to the RNase HII family.</text>
</comment>
<accession>A4WHQ7</accession>
<evidence type="ECO:0000255" key="1">
    <source>
        <dbReference type="HAMAP-Rule" id="MF_00052"/>
    </source>
</evidence>
<evidence type="ECO:0000255" key="2">
    <source>
        <dbReference type="PROSITE-ProRule" id="PRU01319"/>
    </source>
</evidence>
<proteinExistence type="inferred from homology"/>
<protein>
    <recommendedName>
        <fullName evidence="1">Ribonuclease HII</fullName>
        <shortName evidence="1">RNase HII</shortName>
        <ecNumber evidence="1">3.1.26.4</ecNumber>
    </recommendedName>
</protein>
<organism>
    <name type="scientific">Pyrobaculum arsenaticum (strain DSM 13514 / JCM 11321 / PZ6)</name>
    <dbReference type="NCBI Taxonomy" id="340102"/>
    <lineage>
        <taxon>Archaea</taxon>
        <taxon>Thermoproteota</taxon>
        <taxon>Thermoprotei</taxon>
        <taxon>Thermoproteales</taxon>
        <taxon>Thermoproteaceae</taxon>
        <taxon>Pyrobaculum</taxon>
    </lineage>
</organism>
<dbReference type="EC" id="3.1.26.4" evidence="1"/>
<dbReference type="EMBL" id="CP000660">
    <property type="protein sequence ID" value="ABP49924.1"/>
    <property type="molecule type" value="Genomic_DNA"/>
</dbReference>
<dbReference type="SMR" id="A4WHQ7"/>
<dbReference type="STRING" id="340102.Pars_0312"/>
<dbReference type="KEGG" id="pas:Pars_0312"/>
<dbReference type="HOGENOM" id="CLU_036532_0_4_2"/>
<dbReference type="OrthoDB" id="33866at2157"/>
<dbReference type="PhylomeDB" id="A4WHQ7"/>
<dbReference type="Proteomes" id="UP000001567">
    <property type="component" value="Chromosome"/>
</dbReference>
<dbReference type="GO" id="GO:0005737">
    <property type="term" value="C:cytoplasm"/>
    <property type="evidence" value="ECO:0007669"/>
    <property type="project" value="UniProtKB-SubCell"/>
</dbReference>
<dbReference type="GO" id="GO:0032299">
    <property type="term" value="C:ribonuclease H2 complex"/>
    <property type="evidence" value="ECO:0007669"/>
    <property type="project" value="TreeGrafter"/>
</dbReference>
<dbReference type="GO" id="GO:0030145">
    <property type="term" value="F:manganese ion binding"/>
    <property type="evidence" value="ECO:0007669"/>
    <property type="project" value="UniProtKB-UniRule"/>
</dbReference>
<dbReference type="GO" id="GO:0003723">
    <property type="term" value="F:RNA binding"/>
    <property type="evidence" value="ECO:0007669"/>
    <property type="project" value="InterPro"/>
</dbReference>
<dbReference type="GO" id="GO:0004523">
    <property type="term" value="F:RNA-DNA hybrid ribonuclease activity"/>
    <property type="evidence" value="ECO:0007669"/>
    <property type="project" value="UniProtKB-UniRule"/>
</dbReference>
<dbReference type="GO" id="GO:0043137">
    <property type="term" value="P:DNA replication, removal of RNA primer"/>
    <property type="evidence" value="ECO:0007669"/>
    <property type="project" value="TreeGrafter"/>
</dbReference>
<dbReference type="GO" id="GO:0006298">
    <property type="term" value="P:mismatch repair"/>
    <property type="evidence" value="ECO:0007669"/>
    <property type="project" value="TreeGrafter"/>
</dbReference>
<dbReference type="CDD" id="cd07180">
    <property type="entry name" value="RNase_HII_archaea_like"/>
    <property type="match status" value="1"/>
</dbReference>
<dbReference type="Gene3D" id="3.30.420.10">
    <property type="entry name" value="Ribonuclease H-like superfamily/Ribonuclease H"/>
    <property type="match status" value="1"/>
</dbReference>
<dbReference type="HAMAP" id="MF_00052_A">
    <property type="entry name" value="RNase_HII_A"/>
    <property type="match status" value="1"/>
</dbReference>
<dbReference type="InterPro" id="IPR004649">
    <property type="entry name" value="RNase_H2_suA"/>
</dbReference>
<dbReference type="InterPro" id="IPR001352">
    <property type="entry name" value="RNase_HII/HIII"/>
</dbReference>
<dbReference type="InterPro" id="IPR024567">
    <property type="entry name" value="RNase_HII/HIII_dom"/>
</dbReference>
<dbReference type="InterPro" id="IPR020787">
    <property type="entry name" value="RNase_HII_arc"/>
</dbReference>
<dbReference type="InterPro" id="IPR012337">
    <property type="entry name" value="RNaseH-like_sf"/>
</dbReference>
<dbReference type="InterPro" id="IPR036397">
    <property type="entry name" value="RNaseH_sf"/>
</dbReference>
<dbReference type="NCBIfam" id="TIGR00729">
    <property type="entry name" value="ribonuclease HII"/>
    <property type="match status" value="1"/>
</dbReference>
<dbReference type="PANTHER" id="PTHR10954:SF23">
    <property type="entry name" value="RIBONUCLEASE"/>
    <property type="match status" value="1"/>
</dbReference>
<dbReference type="PANTHER" id="PTHR10954">
    <property type="entry name" value="RIBONUCLEASE H2 SUBUNIT A"/>
    <property type="match status" value="1"/>
</dbReference>
<dbReference type="Pfam" id="PF01351">
    <property type="entry name" value="RNase_HII"/>
    <property type="match status" value="1"/>
</dbReference>
<dbReference type="SUPFAM" id="SSF53098">
    <property type="entry name" value="Ribonuclease H-like"/>
    <property type="match status" value="1"/>
</dbReference>
<dbReference type="PROSITE" id="PS51975">
    <property type="entry name" value="RNASE_H_2"/>
    <property type="match status" value="1"/>
</dbReference>